<evidence type="ECO:0000250" key="1"/>
<evidence type="ECO:0000255" key="2"/>
<evidence type="ECO:0000255" key="3">
    <source>
        <dbReference type="PROSITE-ProRule" id="PRU00323"/>
    </source>
</evidence>
<evidence type="ECO:0000269" key="4">
    <source>
    </source>
</evidence>
<evidence type="ECO:0000269" key="5">
    <source>
    </source>
</evidence>
<evidence type="ECO:0000305" key="6"/>
<name>HPLN2_MOUSE</name>
<accession>Q9ESM3</accession>
<feature type="signal peptide" evidence="2">
    <location>
        <begin position="1"/>
        <end position="27"/>
    </location>
</feature>
<feature type="chain" id="PRO_0000013188" description="Hyaluronan and proteoglycan link protein 2">
    <location>
        <begin position="28"/>
        <end position="341"/>
    </location>
</feature>
<feature type="domain" description="Ig-like V-type">
    <location>
        <begin position="35"/>
        <end position="143"/>
    </location>
</feature>
<feature type="domain" description="Link 1" evidence="3">
    <location>
        <begin position="149"/>
        <end position="243"/>
    </location>
</feature>
<feature type="domain" description="Link 2" evidence="3">
    <location>
        <begin position="246"/>
        <end position="339"/>
    </location>
</feature>
<feature type="disulfide bond" evidence="1">
    <location>
        <begin position="58"/>
        <end position="129"/>
    </location>
</feature>
<feature type="disulfide bond" evidence="1">
    <location>
        <begin position="171"/>
        <end position="241"/>
    </location>
</feature>
<feature type="disulfide bond" evidence="1">
    <location>
        <begin position="195"/>
        <end position="216"/>
    </location>
</feature>
<feature type="disulfide bond" evidence="1">
    <location>
        <begin position="266"/>
        <end position="337"/>
    </location>
</feature>
<feature type="disulfide bond" evidence="1">
    <location>
        <begin position="291"/>
        <end position="312"/>
    </location>
</feature>
<organism>
    <name type="scientific">Mus musculus</name>
    <name type="common">Mouse</name>
    <dbReference type="NCBI Taxonomy" id="10090"/>
    <lineage>
        <taxon>Eukaryota</taxon>
        <taxon>Metazoa</taxon>
        <taxon>Chordata</taxon>
        <taxon>Craniata</taxon>
        <taxon>Vertebrata</taxon>
        <taxon>Euteleostomi</taxon>
        <taxon>Mammalia</taxon>
        <taxon>Eutheria</taxon>
        <taxon>Euarchontoglires</taxon>
        <taxon>Glires</taxon>
        <taxon>Rodentia</taxon>
        <taxon>Myomorpha</taxon>
        <taxon>Muroidea</taxon>
        <taxon>Muridae</taxon>
        <taxon>Murinae</taxon>
        <taxon>Mus</taxon>
        <taxon>Mus</taxon>
    </lineage>
</organism>
<protein>
    <recommendedName>
        <fullName>Hyaluronan and proteoglycan link protein 2</fullName>
    </recommendedName>
    <alternativeName>
        <fullName>Brain link protein 1</fullName>
    </alternativeName>
</protein>
<keyword id="KW-1015">Disulfide bond</keyword>
<keyword id="KW-0272">Extracellular matrix</keyword>
<keyword id="KW-0373">Hyaluronic acid</keyword>
<keyword id="KW-0393">Immunoglobulin domain</keyword>
<keyword id="KW-1185">Reference proteome</keyword>
<keyword id="KW-0677">Repeat</keyword>
<keyword id="KW-0964">Secreted</keyword>
<keyword id="KW-0732">Signal</keyword>
<comment type="function">
    <text evidence="5">Mediates a firm binding of versican V2 to hyaluronic acid. May play a pivotal role in the formation of the hyaluronan-associated matrix in the central nervous system (CNS) which facilitates neuronal conduction and general structural stabilization. Binds to hyaluronic acid.</text>
</comment>
<comment type="subcellular location">
    <subcellularLocation>
        <location evidence="5">Secreted</location>
        <location evidence="5">Extracellular space</location>
        <location evidence="5">Extracellular matrix</location>
    </subcellularLocation>
</comment>
<comment type="tissue specificity">
    <text evidence="4 5">Brain. Predominantly expressed by neurons. Colocalizes with versican V2 in developing and adult cerebellar white matter and at the nodes of Ranvier.</text>
</comment>
<comment type="developmental stage">
    <text evidence="5">Expression starts at postnatal day 20 and increases thereafter.</text>
</comment>
<comment type="similarity">
    <text evidence="6">Belongs to the HAPLN family.</text>
</comment>
<dbReference type="EMBL" id="AB049055">
    <property type="protein sequence ID" value="BAB17663.1"/>
    <property type="molecule type" value="mRNA"/>
</dbReference>
<dbReference type="CCDS" id="CCDS17463.1"/>
<dbReference type="RefSeq" id="NP_071314.1">
    <property type="nucleotide sequence ID" value="NM_022031.2"/>
</dbReference>
<dbReference type="RefSeq" id="XP_006502211.1">
    <property type="nucleotide sequence ID" value="XM_006502148.3"/>
</dbReference>
<dbReference type="SMR" id="Q9ESM3"/>
<dbReference type="BioGRID" id="216371">
    <property type="interactions" value="1"/>
</dbReference>
<dbReference type="FunCoup" id="Q9ESM3">
    <property type="interactions" value="56"/>
</dbReference>
<dbReference type="IntAct" id="Q9ESM3">
    <property type="interactions" value="1"/>
</dbReference>
<dbReference type="MINT" id="Q9ESM3"/>
<dbReference type="STRING" id="10090.ENSMUSP00000005014"/>
<dbReference type="iPTMnet" id="Q9ESM3"/>
<dbReference type="SwissPalm" id="Q9ESM3"/>
<dbReference type="PaxDb" id="10090-ENSMUSP00000005014"/>
<dbReference type="ProteomicsDB" id="273316"/>
<dbReference type="ABCD" id="Q9ESM3">
    <property type="antibodies" value="2 sequenced antibodies"/>
</dbReference>
<dbReference type="Antibodypedia" id="34222">
    <property type="antibodies" value="85 antibodies from 24 providers"/>
</dbReference>
<dbReference type="Ensembl" id="ENSMUST00000005014.9">
    <property type="protein sequence ID" value="ENSMUSP00000005014.3"/>
    <property type="gene ID" value="ENSMUSG00000004894.11"/>
</dbReference>
<dbReference type="GeneID" id="73940"/>
<dbReference type="KEGG" id="mmu:73940"/>
<dbReference type="UCSC" id="uc008ptq.2">
    <property type="organism name" value="mouse"/>
</dbReference>
<dbReference type="AGR" id="MGI:2137300"/>
<dbReference type="CTD" id="60484"/>
<dbReference type="MGI" id="MGI:2137300">
    <property type="gene designation" value="Hapln2"/>
</dbReference>
<dbReference type="VEuPathDB" id="HostDB:ENSMUSG00000004894"/>
<dbReference type="eggNOG" id="ENOG502QV1D">
    <property type="taxonomic scope" value="Eukaryota"/>
</dbReference>
<dbReference type="GeneTree" id="ENSGT00940000161384"/>
<dbReference type="HOGENOM" id="CLU_052285_1_0_1"/>
<dbReference type="InParanoid" id="Q9ESM3"/>
<dbReference type="OMA" id="CDGGWLE"/>
<dbReference type="OrthoDB" id="7835at9989"/>
<dbReference type="PhylomeDB" id="Q9ESM3"/>
<dbReference type="TreeFam" id="TF332134"/>
<dbReference type="BioGRID-ORCS" id="73940">
    <property type="hits" value="0 hits in 77 CRISPR screens"/>
</dbReference>
<dbReference type="ChiTaRS" id="Hapln2">
    <property type="organism name" value="mouse"/>
</dbReference>
<dbReference type="PRO" id="PR:Q9ESM3"/>
<dbReference type="Proteomes" id="UP000000589">
    <property type="component" value="Chromosome 3"/>
</dbReference>
<dbReference type="RNAct" id="Q9ESM3">
    <property type="molecule type" value="protein"/>
</dbReference>
<dbReference type="Bgee" id="ENSMUSG00000004894">
    <property type="expression patterns" value="Expressed in lumbar subsegment of spinal cord and 58 other cell types or tissues"/>
</dbReference>
<dbReference type="ExpressionAtlas" id="Q9ESM3">
    <property type="expression patterns" value="baseline and differential"/>
</dbReference>
<dbReference type="GO" id="GO:0031012">
    <property type="term" value="C:extracellular matrix"/>
    <property type="evidence" value="ECO:0000314"/>
    <property type="project" value="UniProtKB"/>
</dbReference>
<dbReference type="GO" id="GO:0005576">
    <property type="term" value="C:extracellular region"/>
    <property type="evidence" value="ECO:0007669"/>
    <property type="project" value="UniProtKB-KW"/>
</dbReference>
<dbReference type="GO" id="GO:0033268">
    <property type="term" value="C:node of Ranvier"/>
    <property type="evidence" value="ECO:0000314"/>
    <property type="project" value="MGI"/>
</dbReference>
<dbReference type="GO" id="GO:0005540">
    <property type="term" value="F:hyaluronic acid binding"/>
    <property type="evidence" value="ECO:0007669"/>
    <property type="project" value="UniProtKB-KW"/>
</dbReference>
<dbReference type="GO" id="GO:0007155">
    <property type="term" value="P:cell adhesion"/>
    <property type="evidence" value="ECO:0007669"/>
    <property type="project" value="InterPro"/>
</dbReference>
<dbReference type="GO" id="GO:0008065">
    <property type="term" value="P:establishment of blood-nerve barrier"/>
    <property type="evidence" value="ECO:0000315"/>
    <property type="project" value="MGI"/>
</dbReference>
<dbReference type="GO" id="GO:0085029">
    <property type="term" value="P:extracellular matrix assembly"/>
    <property type="evidence" value="ECO:0000315"/>
    <property type="project" value="MGI"/>
</dbReference>
<dbReference type="CDD" id="cd03518">
    <property type="entry name" value="Link_domain_HAPLN_module_1"/>
    <property type="match status" value="1"/>
</dbReference>
<dbReference type="CDD" id="cd03519">
    <property type="entry name" value="Link_domain_HAPLN_module_2"/>
    <property type="match status" value="1"/>
</dbReference>
<dbReference type="FunFam" id="2.60.40.10:FF:000846">
    <property type="entry name" value="Hyaluronan and proteoglycan link protein 2"/>
    <property type="match status" value="1"/>
</dbReference>
<dbReference type="FunFam" id="3.10.100.10:FF:000001">
    <property type="entry name" value="Hyaluronan proteoglycan link protein 1"/>
    <property type="match status" value="1"/>
</dbReference>
<dbReference type="FunFam" id="3.10.100.10:FF:000002">
    <property type="entry name" value="Hyaluronan proteoglycan link protein 1"/>
    <property type="match status" value="1"/>
</dbReference>
<dbReference type="Gene3D" id="2.60.40.10">
    <property type="entry name" value="Immunoglobulins"/>
    <property type="match status" value="1"/>
</dbReference>
<dbReference type="Gene3D" id="3.10.100.10">
    <property type="entry name" value="Mannose-Binding Protein A, subunit A"/>
    <property type="match status" value="2"/>
</dbReference>
<dbReference type="InterPro" id="IPR016186">
    <property type="entry name" value="C-type_lectin-like/link_sf"/>
</dbReference>
<dbReference type="InterPro" id="IPR016187">
    <property type="entry name" value="CTDL_fold"/>
</dbReference>
<dbReference type="InterPro" id="IPR050691">
    <property type="entry name" value="Hyaluronan_bind_Proteoglycan"/>
</dbReference>
<dbReference type="InterPro" id="IPR007110">
    <property type="entry name" value="Ig-like_dom"/>
</dbReference>
<dbReference type="InterPro" id="IPR036179">
    <property type="entry name" value="Ig-like_dom_sf"/>
</dbReference>
<dbReference type="InterPro" id="IPR013783">
    <property type="entry name" value="Ig-like_fold"/>
</dbReference>
<dbReference type="InterPro" id="IPR003599">
    <property type="entry name" value="Ig_sub"/>
</dbReference>
<dbReference type="InterPro" id="IPR003598">
    <property type="entry name" value="Ig_sub2"/>
</dbReference>
<dbReference type="InterPro" id="IPR013106">
    <property type="entry name" value="Ig_V-set"/>
</dbReference>
<dbReference type="InterPro" id="IPR000538">
    <property type="entry name" value="Link_dom"/>
</dbReference>
<dbReference type="PANTHER" id="PTHR22804">
    <property type="entry name" value="AGGRECAN/VERSICAN PROTEOGLYCAN"/>
    <property type="match status" value="1"/>
</dbReference>
<dbReference type="PANTHER" id="PTHR22804:SF8">
    <property type="entry name" value="HYALURONAN AND PROTEOGLYCAN LINK PROTEIN 2"/>
    <property type="match status" value="1"/>
</dbReference>
<dbReference type="Pfam" id="PF07686">
    <property type="entry name" value="V-set"/>
    <property type="match status" value="1"/>
</dbReference>
<dbReference type="Pfam" id="PF00193">
    <property type="entry name" value="Xlink"/>
    <property type="match status" value="2"/>
</dbReference>
<dbReference type="PRINTS" id="PR01265">
    <property type="entry name" value="LINKMODULE"/>
</dbReference>
<dbReference type="SMART" id="SM00409">
    <property type="entry name" value="IG"/>
    <property type="match status" value="1"/>
</dbReference>
<dbReference type="SMART" id="SM00408">
    <property type="entry name" value="IGc2"/>
    <property type="match status" value="1"/>
</dbReference>
<dbReference type="SMART" id="SM00406">
    <property type="entry name" value="IGv"/>
    <property type="match status" value="1"/>
</dbReference>
<dbReference type="SMART" id="SM00445">
    <property type="entry name" value="LINK"/>
    <property type="match status" value="2"/>
</dbReference>
<dbReference type="SUPFAM" id="SSF56436">
    <property type="entry name" value="C-type lectin-like"/>
    <property type="match status" value="2"/>
</dbReference>
<dbReference type="SUPFAM" id="SSF48726">
    <property type="entry name" value="Immunoglobulin"/>
    <property type="match status" value="1"/>
</dbReference>
<dbReference type="PROSITE" id="PS50835">
    <property type="entry name" value="IG_LIKE"/>
    <property type="match status" value="1"/>
</dbReference>
<dbReference type="PROSITE" id="PS01241">
    <property type="entry name" value="LINK_1"/>
    <property type="match status" value="2"/>
</dbReference>
<dbReference type="PROSITE" id="PS50963">
    <property type="entry name" value="LINK_2"/>
    <property type="match status" value="2"/>
</dbReference>
<reference key="1">
    <citation type="journal article" date="2000" name="Biochem. Biophys. Res. Commun.">
        <title>The brain link protein-1 (BRAL1): cDNA cloning, genomic structure, and characterization as a novel link protein expressed in adult brain.</title>
        <authorList>
            <person name="Hirakawa S."/>
            <person name="Oohashi T."/>
            <person name="Su W.-D."/>
            <person name="Yoshioka H."/>
            <person name="Murakami T."/>
            <person name="Arata J."/>
            <person name="Ninomiya Y."/>
        </authorList>
    </citation>
    <scope>NUCLEOTIDE SEQUENCE [MRNA]</scope>
    <scope>TISSUE SPECIFICITY</scope>
    <source>
        <tissue>Brain</tissue>
    </source>
</reference>
<reference key="2">
    <citation type="journal article" date="2002" name="Mol. Cell. Neurosci.">
        <title>Bral1, a brain-specific link protein, colocalizing with the versican V2 isoform at the nodes of Ranvier in developing and adult mouse central nervous systems.</title>
        <authorList>
            <person name="Oohashi T."/>
            <person name="Hirakawa S."/>
            <person name="Bekku Y."/>
            <person name="Rauch U."/>
            <person name="Zimmermann D.R."/>
            <person name="Su W.-D."/>
            <person name="Ohtsuka A."/>
            <person name="Murakami T."/>
            <person name="Ninomiya Y."/>
        </authorList>
    </citation>
    <scope>FUNCTION</scope>
    <scope>SUBCELLULAR LOCATION</scope>
    <scope>TISSUE SPECIFICITY</scope>
    <scope>DEVELOPMENTAL STAGE</scope>
</reference>
<proteinExistence type="evidence at transcript level"/>
<sequence>MPSRIPLPAFCCFLLPWAFTSFHKALGNPAPHPGPHYLLPPIHEVIHSRRGATATLPCVLGTSPPSYKVRWSKVEPGELRETLILITNGLHARDYGLLGGRASLRRGHRLDASLIIKNVRLEDEGRYRCELINGIEDESVALTLRLEGVVFPYQPSRGRYQFNYFEAKRACEEQDGRLATYGQLYQAWTEGLDWCNAGWLLEGSVRYPVLTARAPCGGHGRPGIRSYGPRDRSRDRYDAFCFTSALAGQVFFVPGRLTLSEAHAACRRRGAVVAKVGHLYAAWKFSGLDQCDGGWLADGSVRFPITTPRPRCGGLPDPGVRSFGFPRPQQASYGTYCYAEK</sequence>
<gene>
    <name type="primary">Hapln2</name>
    <name type="synonym">Bral1</name>
</gene>